<evidence type="ECO:0000255" key="1">
    <source>
        <dbReference type="HAMAP-Rule" id="MF_00227"/>
    </source>
</evidence>
<protein>
    <recommendedName>
        <fullName evidence="1">Ribonuclease P protein component</fullName>
        <shortName evidence="1">RNase P protein</shortName>
        <shortName evidence="1">RNaseP protein</shortName>
        <ecNumber evidence="1">3.1.26.5</ecNumber>
    </recommendedName>
    <alternativeName>
        <fullName evidence="1">Protein C5</fullName>
    </alternativeName>
</protein>
<organism>
    <name type="scientific">Helicobacter acinonychis (strain Sheeba)</name>
    <dbReference type="NCBI Taxonomy" id="382638"/>
    <lineage>
        <taxon>Bacteria</taxon>
        <taxon>Pseudomonadati</taxon>
        <taxon>Campylobacterota</taxon>
        <taxon>Epsilonproteobacteria</taxon>
        <taxon>Campylobacterales</taxon>
        <taxon>Helicobacteraceae</taxon>
        <taxon>Helicobacter</taxon>
    </lineage>
</organism>
<sequence>MLDELRAEKNFPSKPYDSLKNKSEFDRVYQRGFKKHNSFFSLFVLDASKEPSHFKNPFFCRLKDTEKSCLLGLSVSKKVGNAVKRNLIKRRLRSLVLKHASLCQGFALVFVPKKDCERLDFLTLEKHFLEMLISIKGYMNKKEKGTNHTYAKP</sequence>
<keyword id="KW-0255">Endonuclease</keyword>
<keyword id="KW-0378">Hydrolase</keyword>
<keyword id="KW-0540">Nuclease</keyword>
<keyword id="KW-0694">RNA-binding</keyword>
<keyword id="KW-0819">tRNA processing</keyword>
<reference key="1">
    <citation type="journal article" date="2006" name="PLoS Genet.">
        <title>Who ate whom? Adaptive Helicobacter genomic changes that accompanied a host jump from early humans to large felines.</title>
        <authorList>
            <person name="Eppinger M."/>
            <person name="Baar C."/>
            <person name="Linz B."/>
            <person name="Raddatz G."/>
            <person name="Lanz C."/>
            <person name="Keller H."/>
            <person name="Morelli G."/>
            <person name="Gressmann H."/>
            <person name="Achtman M."/>
            <person name="Schuster S.C."/>
        </authorList>
    </citation>
    <scope>NUCLEOTIDE SEQUENCE [LARGE SCALE GENOMIC DNA]</scope>
    <source>
        <strain>Sheeba</strain>
    </source>
</reference>
<accession>Q17ZA3</accession>
<comment type="function">
    <text evidence="1">RNaseP catalyzes the removal of the 5'-leader sequence from pre-tRNA to produce the mature 5'-terminus. It can also cleave other RNA substrates such as 4.5S RNA. The protein component plays an auxiliary but essential role in vivo by binding to the 5'-leader sequence and broadening the substrate specificity of the ribozyme.</text>
</comment>
<comment type="catalytic activity">
    <reaction evidence="1">
        <text>Endonucleolytic cleavage of RNA, removing 5'-extranucleotides from tRNA precursor.</text>
        <dbReference type="EC" id="3.1.26.5"/>
    </reaction>
</comment>
<comment type="subunit">
    <text evidence="1">Consists of a catalytic RNA component (M1 or rnpB) and a protein subunit.</text>
</comment>
<comment type="similarity">
    <text evidence="1">Belongs to the RnpA family.</text>
</comment>
<dbReference type="EC" id="3.1.26.5" evidence="1"/>
<dbReference type="EMBL" id="AM260522">
    <property type="protein sequence ID" value="CAJ99023.1"/>
    <property type="molecule type" value="Genomic_DNA"/>
</dbReference>
<dbReference type="RefSeq" id="WP_011577139.1">
    <property type="nucleotide sequence ID" value="NC_008229.1"/>
</dbReference>
<dbReference type="SMR" id="Q17ZA3"/>
<dbReference type="STRING" id="382638.Hac_0171"/>
<dbReference type="GeneID" id="31757702"/>
<dbReference type="KEGG" id="hac:Hac_0171"/>
<dbReference type="eggNOG" id="COG0594">
    <property type="taxonomic scope" value="Bacteria"/>
</dbReference>
<dbReference type="HOGENOM" id="CLU_117179_9_3_7"/>
<dbReference type="OrthoDB" id="9810867at2"/>
<dbReference type="BioCyc" id="HACI382638:HAC_RS00765-MONOMER"/>
<dbReference type="Proteomes" id="UP000000775">
    <property type="component" value="Chromosome"/>
</dbReference>
<dbReference type="GO" id="GO:0030677">
    <property type="term" value="C:ribonuclease P complex"/>
    <property type="evidence" value="ECO:0007669"/>
    <property type="project" value="TreeGrafter"/>
</dbReference>
<dbReference type="GO" id="GO:0042781">
    <property type="term" value="F:3'-tRNA processing endoribonuclease activity"/>
    <property type="evidence" value="ECO:0007669"/>
    <property type="project" value="TreeGrafter"/>
</dbReference>
<dbReference type="GO" id="GO:0004526">
    <property type="term" value="F:ribonuclease P activity"/>
    <property type="evidence" value="ECO:0007669"/>
    <property type="project" value="UniProtKB-UniRule"/>
</dbReference>
<dbReference type="GO" id="GO:0000049">
    <property type="term" value="F:tRNA binding"/>
    <property type="evidence" value="ECO:0007669"/>
    <property type="project" value="UniProtKB-UniRule"/>
</dbReference>
<dbReference type="GO" id="GO:0001682">
    <property type="term" value="P:tRNA 5'-leader removal"/>
    <property type="evidence" value="ECO:0007669"/>
    <property type="project" value="UniProtKB-UniRule"/>
</dbReference>
<dbReference type="Gene3D" id="3.30.230.10">
    <property type="match status" value="1"/>
</dbReference>
<dbReference type="HAMAP" id="MF_00227">
    <property type="entry name" value="RNase_P"/>
    <property type="match status" value="1"/>
</dbReference>
<dbReference type="InterPro" id="IPR020568">
    <property type="entry name" value="Ribosomal_Su5_D2-typ_SF"/>
</dbReference>
<dbReference type="InterPro" id="IPR014721">
    <property type="entry name" value="Ribsml_uS5_D2-typ_fold_subgr"/>
</dbReference>
<dbReference type="InterPro" id="IPR000100">
    <property type="entry name" value="RNase_P"/>
</dbReference>
<dbReference type="InterPro" id="IPR020539">
    <property type="entry name" value="RNase_P_CS"/>
</dbReference>
<dbReference type="NCBIfam" id="TIGR00188">
    <property type="entry name" value="rnpA"/>
    <property type="match status" value="1"/>
</dbReference>
<dbReference type="PANTHER" id="PTHR33992">
    <property type="entry name" value="RIBONUCLEASE P PROTEIN COMPONENT"/>
    <property type="match status" value="1"/>
</dbReference>
<dbReference type="PANTHER" id="PTHR33992:SF1">
    <property type="entry name" value="RIBONUCLEASE P PROTEIN COMPONENT"/>
    <property type="match status" value="1"/>
</dbReference>
<dbReference type="Pfam" id="PF00825">
    <property type="entry name" value="Ribonuclease_P"/>
    <property type="match status" value="1"/>
</dbReference>
<dbReference type="SUPFAM" id="SSF54211">
    <property type="entry name" value="Ribosomal protein S5 domain 2-like"/>
    <property type="match status" value="1"/>
</dbReference>
<dbReference type="PROSITE" id="PS00648">
    <property type="entry name" value="RIBONUCLEASE_P"/>
    <property type="match status" value="1"/>
</dbReference>
<gene>
    <name evidence="1" type="primary">rnpA</name>
    <name type="ordered locus">Hac_0171</name>
</gene>
<name>RNPA_HELAH</name>
<proteinExistence type="inferred from homology"/>
<feature type="chain" id="PRO_1000021413" description="Ribonuclease P protein component">
    <location>
        <begin position="1"/>
        <end position="153"/>
    </location>
</feature>